<keyword id="KW-0997">Cell inner membrane</keyword>
<keyword id="KW-1003">Cell membrane</keyword>
<keyword id="KW-0472">Membrane</keyword>
<keyword id="KW-0511">Multifunctional enzyme</keyword>
<keyword id="KW-0520">NAD</keyword>
<keyword id="KW-0874">Quinone</keyword>
<keyword id="KW-1185">Reference proteome</keyword>
<keyword id="KW-1278">Translocase</keyword>
<keyword id="KW-0813">Transport</keyword>
<keyword id="KW-0830">Ubiquinone</keyword>
<name>NUOCD_CROS8</name>
<evidence type="ECO:0000255" key="1">
    <source>
        <dbReference type="HAMAP-Rule" id="MF_01359"/>
    </source>
</evidence>
<feature type="chain" id="PRO_0000358628" description="NADH-quinone oxidoreductase subunit C/D">
    <location>
        <begin position="1"/>
        <end position="603"/>
    </location>
</feature>
<feature type="region of interest" description="NADH dehydrogenase I subunit C" evidence="1">
    <location>
        <begin position="1"/>
        <end position="193"/>
    </location>
</feature>
<feature type="region of interest" description="NADH dehydrogenase I subunit D" evidence="1">
    <location>
        <begin position="217"/>
        <end position="603"/>
    </location>
</feature>
<organism>
    <name type="scientific">Cronobacter sakazakii (strain ATCC BAA-894)</name>
    <name type="common">Enterobacter sakazakii</name>
    <dbReference type="NCBI Taxonomy" id="290339"/>
    <lineage>
        <taxon>Bacteria</taxon>
        <taxon>Pseudomonadati</taxon>
        <taxon>Pseudomonadota</taxon>
        <taxon>Gammaproteobacteria</taxon>
        <taxon>Enterobacterales</taxon>
        <taxon>Enterobacteriaceae</taxon>
        <taxon>Cronobacter</taxon>
    </lineage>
</organism>
<sequence>MVNNMTDLTAQDAVLPVWQTRDHLDDPVIGELRNRFGPDAFTVQATRTGVPVVWVKREQLLEVGEFLRKLPKPYVMLYDLHGMDERLRTHRNGLPAADFSVFYHLLSIDRNRDIMLKVALSENDLNVPTFTRLFPNANWYERETWEMFGITFTGHPNLRRIMMPPTWEGHPLRKDYPARATEFDPFTLTKQKEELEMEALTFKPEEWGMKRGNDTEDFMFLNLGPNHPSAHGAFRIILQLDGEEIVDCVPDIGYHHRGAEKMGERQSWHSYIPYTDRVEYLGGCVNEMPYVLAVEKLAGIQVPERVEVIRVMLSELFRINSHLLYISTFIQDVGAMTPVFFAFTDRQKIYDLVEAITGFRMHPAWFRIGGVAHDLPRGWDRLLKEFLEWMPKRLDSYVKAALKNTILKGRSQGVAAYDAKEALAWGTTGAGLRATGIDFDVRKARPYSGYQNFEFEVPVGGGISDCYTRVMLKVEEVRQSLRILEQCLKNMPEGPFKADHPLTTPPPKERTLQHIETLITHFLQVSWGPVMPANESFQMIEATKGINSYYLTSDGSTMSYRTRVRTPSFPHLQQIPSVIRGSLVSDLIVYLGSIDFVMSDVDR</sequence>
<accession>A7MH24</accession>
<protein>
    <recommendedName>
        <fullName evidence="1">NADH-quinone oxidoreductase subunit C/D</fullName>
        <ecNumber evidence="1">7.1.1.-</ecNumber>
    </recommendedName>
    <alternativeName>
        <fullName evidence="1">NADH dehydrogenase I subunit C/D</fullName>
    </alternativeName>
    <alternativeName>
        <fullName evidence="1">NDH-1 subunit C/D</fullName>
    </alternativeName>
</protein>
<proteinExistence type="inferred from homology"/>
<reference key="1">
    <citation type="journal article" date="2010" name="PLoS ONE">
        <title>Genome sequence of Cronobacter sakazakii BAA-894 and comparative genomic hybridization analysis with other Cronobacter species.</title>
        <authorList>
            <person name="Kucerova E."/>
            <person name="Clifton S.W."/>
            <person name="Xia X.Q."/>
            <person name="Long F."/>
            <person name="Porwollik S."/>
            <person name="Fulton L."/>
            <person name="Fronick C."/>
            <person name="Minx P."/>
            <person name="Kyung K."/>
            <person name="Warren W."/>
            <person name="Fulton R."/>
            <person name="Feng D."/>
            <person name="Wollam A."/>
            <person name="Shah N."/>
            <person name="Bhonagiri V."/>
            <person name="Nash W.E."/>
            <person name="Hallsworth-Pepin K."/>
            <person name="Wilson R.K."/>
            <person name="McClelland M."/>
            <person name="Forsythe S.J."/>
        </authorList>
    </citation>
    <scope>NUCLEOTIDE SEQUENCE [LARGE SCALE GENOMIC DNA]</scope>
    <source>
        <strain>ATCC BAA-894</strain>
    </source>
</reference>
<gene>
    <name evidence="1" type="primary">nuoC</name>
    <name evidence="1" type="synonym">nuoCD</name>
    <name evidence="1" type="synonym">nuoD</name>
    <name type="ordered locus">ESA_00934</name>
</gene>
<dbReference type="EC" id="7.1.1.-" evidence="1"/>
<dbReference type="EMBL" id="CP000783">
    <property type="protein sequence ID" value="ABU76204.1"/>
    <property type="molecule type" value="Genomic_DNA"/>
</dbReference>
<dbReference type="SMR" id="A7MH24"/>
<dbReference type="KEGG" id="esa:ESA_00934"/>
<dbReference type="HOGENOM" id="CLU_015134_3_2_6"/>
<dbReference type="Proteomes" id="UP000000260">
    <property type="component" value="Chromosome"/>
</dbReference>
<dbReference type="GO" id="GO:0030964">
    <property type="term" value="C:NADH dehydrogenase complex"/>
    <property type="evidence" value="ECO:0007669"/>
    <property type="project" value="InterPro"/>
</dbReference>
<dbReference type="GO" id="GO:0005886">
    <property type="term" value="C:plasma membrane"/>
    <property type="evidence" value="ECO:0007669"/>
    <property type="project" value="UniProtKB-SubCell"/>
</dbReference>
<dbReference type="GO" id="GO:0051287">
    <property type="term" value="F:NAD binding"/>
    <property type="evidence" value="ECO:0007669"/>
    <property type="project" value="InterPro"/>
</dbReference>
<dbReference type="GO" id="GO:0008137">
    <property type="term" value="F:NADH dehydrogenase (ubiquinone) activity"/>
    <property type="evidence" value="ECO:0007669"/>
    <property type="project" value="InterPro"/>
</dbReference>
<dbReference type="GO" id="GO:0050136">
    <property type="term" value="F:NADH:ubiquinone reductase (non-electrogenic) activity"/>
    <property type="evidence" value="ECO:0007669"/>
    <property type="project" value="UniProtKB-UniRule"/>
</dbReference>
<dbReference type="GO" id="GO:0048038">
    <property type="term" value="F:quinone binding"/>
    <property type="evidence" value="ECO:0007669"/>
    <property type="project" value="UniProtKB-KW"/>
</dbReference>
<dbReference type="FunFam" id="1.10.645.10:FF:000001">
    <property type="entry name" value="NADH-quinone oxidoreductase subunit C/D"/>
    <property type="match status" value="1"/>
</dbReference>
<dbReference type="FunFam" id="3.30.460.80:FF:000001">
    <property type="entry name" value="NADH-quinone oxidoreductase subunit C/D"/>
    <property type="match status" value="1"/>
</dbReference>
<dbReference type="Gene3D" id="1.10.645.10">
    <property type="entry name" value="Cytochrome-c3 Hydrogenase, chain B"/>
    <property type="match status" value="1"/>
</dbReference>
<dbReference type="Gene3D" id="3.30.460.80">
    <property type="entry name" value="NADH:ubiquinone oxidoreductase, 30kDa subunit"/>
    <property type="match status" value="1"/>
</dbReference>
<dbReference type="HAMAP" id="MF_01357">
    <property type="entry name" value="NDH1_NuoC"/>
    <property type="match status" value="1"/>
</dbReference>
<dbReference type="HAMAP" id="MF_01359">
    <property type="entry name" value="NDH1_NuoCD_1"/>
    <property type="match status" value="1"/>
</dbReference>
<dbReference type="HAMAP" id="MF_01358">
    <property type="entry name" value="NDH1_NuoD"/>
    <property type="match status" value="1"/>
</dbReference>
<dbReference type="InterPro" id="IPR010218">
    <property type="entry name" value="NADH_DH_suC"/>
</dbReference>
<dbReference type="InterPro" id="IPR023062">
    <property type="entry name" value="NADH_DH_suCD"/>
</dbReference>
<dbReference type="InterPro" id="IPR001135">
    <property type="entry name" value="NADH_Q_OxRdtase_suD"/>
</dbReference>
<dbReference type="InterPro" id="IPR037232">
    <property type="entry name" value="NADH_quin_OxRdtase_su_C/D-like"/>
</dbReference>
<dbReference type="InterPro" id="IPR001268">
    <property type="entry name" value="NADH_UbQ_OxRdtase_30kDa_su"/>
</dbReference>
<dbReference type="InterPro" id="IPR014029">
    <property type="entry name" value="NADH_UbQ_OxRdtase_49kDa_CS"/>
</dbReference>
<dbReference type="InterPro" id="IPR020396">
    <property type="entry name" value="NADH_UbQ_OxRdtase_CS"/>
</dbReference>
<dbReference type="InterPro" id="IPR022885">
    <property type="entry name" value="NDH1_su_D/H"/>
</dbReference>
<dbReference type="InterPro" id="IPR029014">
    <property type="entry name" value="NiFe-Hase_large"/>
</dbReference>
<dbReference type="NCBIfam" id="TIGR01961">
    <property type="entry name" value="NuoC_fam"/>
    <property type="match status" value="1"/>
</dbReference>
<dbReference type="NCBIfam" id="TIGR01962">
    <property type="entry name" value="NuoD"/>
    <property type="match status" value="1"/>
</dbReference>
<dbReference type="NCBIfam" id="NF004739">
    <property type="entry name" value="PRK06075.1"/>
    <property type="match status" value="1"/>
</dbReference>
<dbReference type="NCBIfam" id="NF008728">
    <property type="entry name" value="PRK11742.1"/>
    <property type="match status" value="1"/>
</dbReference>
<dbReference type="PANTHER" id="PTHR11993:SF45">
    <property type="entry name" value="NADH-QUINONE OXIDOREDUCTASE SUBUNIT C_D"/>
    <property type="match status" value="1"/>
</dbReference>
<dbReference type="PANTHER" id="PTHR11993">
    <property type="entry name" value="NADH-UBIQUINONE OXIDOREDUCTASE 49 KDA SUBUNIT"/>
    <property type="match status" value="1"/>
</dbReference>
<dbReference type="Pfam" id="PF00329">
    <property type="entry name" value="Complex1_30kDa"/>
    <property type="match status" value="1"/>
</dbReference>
<dbReference type="Pfam" id="PF00346">
    <property type="entry name" value="Complex1_49kDa"/>
    <property type="match status" value="1"/>
</dbReference>
<dbReference type="SUPFAM" id="SSF56762">
    <property type="entry name" value="HydB/Nqo4-like"/>
    <property type="match status" value="1"/>
</dbReference>
<dbReference type="SUPFAM" id="SSF143243">
    <property type="entry name" value="Nqo5-like"/>
    <property type="match status" value="1"/>
</dbReference>
<dbReference type="PROSITE" id="PS00542">
    <property type="entry name" value="COMPLEX1_30K"/>
    <property type="match status" value="1"/>
</dbReference>
<dbReference type="PROSITE" id="PS00535">
    <property type="entry name" value="COMPLEX1_49K"/>
    <property type="match status" value="1"/>
</dbReference>
<comment type="function">
    <text evidence="1">NDH-1 shuttles electrons from NADH, via FMN and iron-sulfur (Fe-S) centers, to quinones in the respiratory chain. The immediate electron acceptor for the enzyme in this species is believed to be ubiquinone. Couples the redox reaction to proton translocation (for every two electrons transferred, four hydrogen ions are translocated across the cytoplasmic membrane), and thus conserves the redox energy in a proton gradient.</text>
</comment>
<comment type="catalytic activity">
    <reaction evidence="1">
        <text>a quinone + NADH + 5 H(+)(in) = a quinol + NAD(+) + 4 H(+)(out)</text>
        <dbReference type="Rhea" id="RHEA:57888"/>
        <dbReference type="ChEBI" id="CHEBI:15378"/>
        <dbReference type="ChEBI" id="CHEBI:24646"/>
        <dbReference type="ChEBI" id="CHEBI:57540"/>
        <dbReference type="ChEBI" id="CHEBI:57945"/>
        <dbReference type="ChEBI" id="CHEBI:132124"/>
    </reaction>
</comment>
<comment type="subunit">
    <text evidence="1">NDH-1 is composed of 13 different subunits. Subunits NuoB, CD, E, F, and G constitute the peripheral sector of the complex.</text>
</comment>
<comment type="subcellular location">
    <subcellularLocation>
        <location evidence="1">Cell inner membrane</location>
        <topology evidence="1">Peripheral membrane protein</topology>
        <orientation evidence="1">Cytoplasmic side</orientation>
    </subcellularLocation>
</comment>
<comment type="similarity">
    <text evidence="1">In the N-terminal section; belongs to the complex I 30 kDa subunit family.</text>
</comment>
<comment type="similarity">
    <text evidence="1">In the C-terminal section; belongs to the complex I 49 kDa subunit family.</text>
</comment>